<reference key="1">
    <citation type="submission" date="2009-04" db="EMBL/GenBank/DDBJ databases">
        <title>Genome sequence of Bacillus anthracis A0248.</title>
        <authorList>
            <person name="Dodson R.J."/>
            <person name="Munk A.C."/>
            <person name="Bruce D."/>
            <person name="Detter C."/>
            <person name="Tapia R."/>
            <person name="Sutton G."/>
            <person name="Sims D."/>
            <person name="Brettin T."/>
        </authorList>
    </citation>
    <scope>NUCLEOTIDE SEQUENCE [LARGE SCALE GENOMIC DNA]</scope>
    <source>
        <strain>A0248</strain>
    </source>
</reference>
<protein>
    <recommendedName>
        <fullName evidence="1">4-hydroxy-3-methylbut-2-enyl diphosphate reductase</fullName>
        <shortName evidence="1">HMBPP reductase</shortName>
        <ecNumber evidence="1">1.17.7.4</ecNumber>
    </recommendedName>
</protein>
<evidence type="ECO:0000255" key="1">
    <source>
        <dbReference type="HAMAP-Rule" id="MF_00191"/>
    </source>
</evidence>
<proteinExistence type="inferred from homology"/>
<organism>
    <name type="scientific">Bacillus anthracis (strain A0248)</name>
    <dbReference type="NCBI Taxonomy" id="592021"/>
    <lineage>
        <taxon>Bacteria</taxon>
        <taxon>Bacillati</taxon>
        <taxon>Bacillota</taxon>
        <taxon>Bacilli</taxon>
        <taxon>Bacillales</taxon>
        <taxon>Bacillaceae</taxon>
        <taxon>Bacillus</taxon>
        <taxon>Bacillus cereus group</taxon>
    </lineage>
</organism>
<accession>C3P8J4</accession>
<comment type="function">
    <text evidence="1">Catalyzes the conversion of 1-hydroxy-2-methyl-2-(E)-butenyl 4-diphosphate (HMBPP) into a mixture of isopentenyl diphosphate (IPP) and dimethylallyl diphosphate (DMAPP). Acts in the terminal step of the DOXP/MEP pathway for isoprenoid precursor biosynthesis.</text>
</comment>
<comment type="catalytic activity">
    <reaction evidence="1">
        <text>isopentenyl diphosphate + 2 oxidized [2Fe-2S]-[ferredoxin] + H2O = (2E)-4-hydroxy-3-methylbut-2-enyl diphosphate + 2 reduced [2Fe-2S]-[ferredoxin] + 2 H(+)</text>
        <dbReference type="Rhea" id="RHEA:24488"/>
        <dbReference type="Rhea" id="RHEA-COMP:10000"/>
        <dbReference type="Rhea" id="RHEA-COMP:10001"/>
        <dbReference type="ChEBI" id="CHEBI:15377"/>
        <dbReference type="ChEBI" id="CHEBI:15378"/>
        <dbReference type="ChEBI" id="CHEBI:33737"/>
        <dbReference type="ChEBI" id="CHEBI:33738"/>
        <dbReference type="ChEBI" id="CHEBI:128753"/>
        <dbReference type="ChEBI" id="CHEBI:128769"/>
        <dbReference type="EC" id="1.17.7.4"/>
    </reaction>
</comment>
<comment type="catalytic activity">
    <reaction evidence="1">
        <text>dimethylallyl diphosphate + 2 oxidized [2Fe-2S]-[ferredoxin] + H2O = (2E)-4-hydroxy-3-methylbut-2-enyl diphosphate + 2 reduced [2Fe-2S]-[ferredoxin] + 2 H(+)</text>
        <dbReference type="Rhea" id="RHEA:24825"/>
        <dbReference type="Rhea" id="RHEA-COMP:10000"/>
        <dbReference type="Rhea" id="RHEA-COMP:10001"/>
        <dbReference type="ChEBI" id="CHEBI:15377"/>
        <dbReference type="ChEBI" id="CHEBI:15378"/>
        <dbReference type="ChEBI" id="CHEBI:33737"/>
        <dbReference type="ChEBI" id="CHEBI:33738"/>
        <dbReference type="ChEBI" id="CHEBI:57623"/>
        <dbReference type="ChEBI" id="CHEBI:128753"/>
        <dbReference type="EC" id="1.17.7.4"/>
    </reaction>
</comment>
<comment type="cofactor">
    <cofactor evidence="1">
        <name>[4Fe-4S] cluster</name>
        <dbReference type="ChEBI" id="CHEBI:49883"/>
    </cofactor>
    <text evidence="1">Binds 1 [4Fe-4S] cluster per subunit.</text>
</comment>
<comment type="pathway">
    <text evidence="1">Isoprenoid biosynthesis; dimethylallyl diphosphate biosynthesis; dimethylallyl diphosphate from (2E)-4-hydroxy-3-methylbutenyl diphosphate: step 1/1.</text>
</comment>
<comment type="pathway">
    <text evidence="1">Isoprenoid biosynthesis; isopentenyl diphosphate biosynthesis via DXP pathway; isopentenyl diphosphate from 1-deoxy-D-xylulose 5-phosphate: step 6/6.</text>
</comment>
<comment type="similarity">
    <text evidence="1">Belongs to the IspH family.</text>
</comment>
<gene>
    <name evidence="1" type="primary">ispH</name>
    <name type="ordered locus">BAA_4532</name>
</gene>
<keyword id="KW-0004">4Fe-4S</keyword>
<keyword id="KW-0408">Iron</keyword>
<keyword id="KW-0411">Iron-sulfur</keyword>
<keyword id="KW-0414">Isoprene biosynthesis</keyword>
<keyword id="KW-0479">Metal-binding</keyword>
<keyword id="KW-0560">Oxidoreductase</keyword>
<dbReference type="EC" id="1.17.7.4" evidence="1"/>
<dbReference type="EMBL" id="CP001598">
    <property type="protein sequence ID" value="ACQ46495.1"/>
    <property type="molecule type" value="Genomic_DNA"/>
</dbReference>
<dbReference type="RefSeq" id="WP_000706669.1">
    <property type="nucleotide sequence ID" value="NC_012659.1"/>
</dbReference>
<dbReference type="SMR" id="C3P8J4"/>
<dbReference type="KEGG" id="bai:BAA_4532"/>
<dbReference type="HOGENOM" id="CLU_027486_0_0_9"/>
<dbReference type="UniPathway" id="UPA00056">
    <property type="reaction ID" value="UER00097"/>
</dbReference>
<dbReference type="UniPathway" id="UPA00059">
    <property type="reaction ID" value="UER00105"/>
</dbReference>
<dbReference type="GO" id="GO:0051539">
    <property type="term" value="F:4 iron, 4 sulfur cluster binding"/>
    <property type="evidence" value="ECO:0007669"/>
    <property type="project" value="UniProtKB-UniRule"/>
</dbReference>
<dbReference type="GO" id="GO:0051745">
    <property type="term" value="F:4-hydroxy-3-methylbut-2-enyl diphosphate reductase activity"/>
    <property type="evidence" value="ECO:0007669"/>
    <property type="project" value="UniProtKB-UniRule"/>
</dbReference>
<dbReference type="GO" id="GO:0046872">
    <property type="term" value="F:metal ion binding"/>
    <property type="evidence" value="ECO:0007669"/>
    <property type="project" value="UniProtKB-KW"/>
</dbReference>
<dbReference type="GO" id="GO:0050992">
    <property type="term" value="P:dimethylallyl diphosphate biosynthetic process"/>
    <property type="evidence" value="ECO:0007669"/>
    <property type="project" value="UniProtKB-UniRule"/>
</dbReference>
<dbReference type="GO" id="GO:0019288">
    <property type="term" value="P:isopentenyl diphosphate biosynthetic process, methylerythritol 4-phosphate pathway"/>
    <property type="evidence" value="ECO:0007669"/>
    <property type="project" value="UniProtKB-UniRule"/>
</dbReference>
<dbReference type="GO" id="GO:0016114">
    <property type="term" value="P:terpenoid biosynthetic process"/>
    <property type="evidence" value="ECO:0007669"/>
    <property type="project" value="UniProtKB-UniRule"/>
</dbReference>
<dbReference type="CDD" id="cd13944">
    <property type="entry name" value="lytB_ispH"/>
    <property type="match status" value="1"/>
</dbReference>
<dbReference type="Gene3D" id="3.40.50.11270">
    <property type="match status" value="1"/>
</dbReference>
<dbReference type="Gene3D" id="3.40.1010.20">
    <property type="entry name" value="4-hydroxy-3-methylbut-2-enyl diphosphate reductase, catalytic domain"/>
    <property type="match status" value="2"/>
</dbReference>
<dbReference type="HAMAP" id="MF_00191">
    <property type="entry name" value="IspH"/>
    <property type="match status" value="1"/>
</dbReference>
<dbReference type="InterPro" id="IPR003451">
    <property type="entry name" value="LytB/IspH"/>
</dbReference>
<dbReference type="NCBIfam" id="TIGR00216">
    <property type="entry name" value="ispH_lytB"/>
    <property type="match status" value="1"/>
</dbReference>
<dbReference type="NCBIfam" id="NF002187">
    <property type="entry name" value="PRK01045.1-1"/>
    <property type="match status" value="1"/>
</dbReference>
<dbReference type="PANTHER" id="PTHR30426">
    <property type="entry name" value="4-HYDROXY-3-METHYLBUT-2-ENYL DIPHOSPHATE REDUCTASE"/>
    <property type="match status" value="1"/>
</dbReference>
<dbReference type="PANTHER" id="PTHR30426:SF0">
    <property type="entry name" value="4-HYDROXY-3-METHYLBUT-2-ENYL DIPHOSPHATE REDUCTASE"/>
    <property type="match status" value="1"/>
</dbReference>
<dbReference type="Pfam" id="PF02401">
    <property type="entry name" value="LYTB"/>
    <property type="match status" value="1"/>
</dbReference>
<sequence>MKIVKISPRGYCYGVVDAMVIARNAALDTSLPRPIYILGMIVHNKHVTDAFEEDGIITLDGPSRLDILDKIDSGTVIFTAHGVSPEVKQRAKEKGLTTIDATCPDVTKTHDLIEAKKAEGYHVIYIGKKNHPEPEGAVGIAPDIVHLIERADDLKTLEIPTDKILVTNQTTMSQWDVQHLMEDIQKKFPTAEFHKEICLATQVRQEAVAKQADVADLTIVVGDPKSNNSNRLAQVSQEIAGTKAYRVADVSEIKLEWLQGVENVAVTAGASTPTPITKEVIAFLEQYDPMNPATWERVRKVPLQKILPRVKVKKEQ</sequence>
<name>ISPH_BACAA</name>
<feature type="chain" id="PRO_1000124273" description="4-hydroxy-3-methylbut-2-enyl diphosphate reductase">
    <location>
        <begin position="1"/>
        <end position="316"/>
    </location>
</feature>
<feature type="active site" description="Proton donor" evidence="1">
    <location>
        <position position="133"/>
    </location>
</feature>
<feature type="binding site" evidence="1">
    <location>
        <position position="12"/>
    </location>
    <ligand>
        <name>[4Fe-4S] cluster</name>
        <dbReference type="ChEBI" id="CHEBI:49883"/>
    </ligand>
</feature>
<feature type="binding site" evidence="1">
    <location>
        <position position="43"/>
    </location>
    <ligand>
        <name>(2E)-4-hydroxy-3-methylbut-2-enyl diphosphate</name>
        <dbReference type="ChEBI" id="CHEBI:128753"/>
    </ligand>
</feature>
<feature type="binding site" evidence="1">
    <location>
        <position position="43"/>
    </location>
    <ligand>
        <name>dimethylallyl diphosphate</name>
        <dbReference type="ChEBI" id="CHEBI:57623"/>
    </ligand>
</feature>
<feature type="binding site" evidence="1">
    <location>
        <position position="43"/>
    </location>
    <ligand>
        <name>isopentenyl diphosphate</name>
        <dbReference type="ChEBI" id="CHEBI:128769"/>
    </ligand>
</feature>
<feature type="binding site" evidence="1">
    <location>
        <position position="81"/>
    </location>
    <ligand>
        <name>(2E)-4-hydroxy-3-methylbut-2-enyl diphosphate</name>
        <dbReference type="ChEBI" id="CHEBI:128753"/>
    </ligand>
</feature>
<feature type="binding site" evidence="1">
    <location>
        <position position="81"/>
    </location>
    <ligand>
        <name>dimethylallyl diphosphate</name>
        <dbReference type="ChEBI" id="CHEBI:57623"/>
    </ligand>
</feature>
<feature type="binding site" evidence="1">
    <location>
        <position position="81"/>
    </location>
    <ligand>
        <name>isopentenyl diphosphate</name>
        <dbReference type="ChEBI" id="CHEBI:128769"/>
    </ligand>
</feature>
<feature type="binding site" evidence="1">
    <location>
        <position position="103"/>
    </location>
    <ligand>
        <name>[4Fe-4S] cluster</name>
        <dbReference type="ChEBI" id="CHEBI:49883"/>
    </ligand>
</feature>
<feature type="binding site" evidence="1">
    <location>
        <position position="131"/>
    </location>
    <ligand>
        <name>(2E)-4-hydroxy-3-methylbut-2-enyl diphosphate</name>
        <dbReference type="ChEBI" id="CHEBI:128753"/>
    </ligand>
</feature>
<feature type="binding site" evidence="1">
    <location>
        <position position="131"/>
    </location>
    <ligand>
        <name>dimethylallyl diphosphate</name>
        <dbReference type="ChEBI" id="CHEBI:57623"/>
    </ligand>
</feature>
<feature type="binding site" evidence="1">
    <location>
        <position position="131"/>
    </location>
    <ligand>
        <name>isopentenyl diphosphate</name>
        <dbReference type="ChEBI" id="CHEBI:128769"/>
    </ligand>
</feature>
<feature type="binding site" evidence="1">
    <location>
        <position position="170"/>
    </location>
    <ligand>
        <name>(2E)-4-hydroxy-3-methylbut-2-enyl diphosphate</name>
        <dbReference type="ChEBI" id="CHEBI:128753"/>
    </ligand>
</feature>
<feature type="binding site" evidence="1">
    <location>
        <position position="198"/>
    </location>
    <ligand>
        <name>[4Fe-4S] cluster</name>
        <dbReference type="ChEBI" id="CHEBI:49883"/>
    </ligand>
</feature>
<feature type="binding site" evidence="1">
    <location>
        <position position="226"/>
    </location>
    <ligand>
        <name>(2E)-4-hydroxy-3-methylbut-2-enyl diphosphate</name>
        <dbReference type="ChEBI" id="CHEBI:128753"/>
    </ligand>
</feature>
<feature type="binding site" evidence="1">
    <location>
        <position position="226"/>
    </location>
    <ligand>
        <name>dimethylallyl diphosphate</name>
        <dbReference type="ChEBI" id="CHEBI:57623"/>
    </ligand>
</feature>
<feature type="binding site" evidence="1">
    <location>
        <position position="226"/>
    </location>
    <ligand>
        <name>isopentenyl diphosphate</name>
        <dbReference type="ChEBI" id="CHEBI:128769"/>
    </ligand>
</feature>
<feature type="binding site" evidence="1">
    <location>
        <position position="228"/>
    </location>
    <ligand>
        <name>(2E)-4-hydroxy-3-methylbut-2-enyl diphosphate</name>
        <dbReference type="ChEBI" id="CHEBI:128753"/>
    </ligand>
</feature>
<feature type="binding site" evidence="1">
    <location>
        <position position="228"/>
    </location>
    <ligand>
        <name>dimethylallyl diphosphate</name>
        <dbReference type="ChEBI" id="CHEBI:57623"/>
    </ligand>
</feature>
<feature type="binding site" evidence="1">
    <location>
        <position position="228"/>
    </location>
    <ligand>
        <name>isopentenyl diphosphate</name>
        <dbReference type="ChEBI" id="CHEBI:128769"/>
    </ligand>
</feature>
<feature type="binding site" evidence="1">
    <location>
        <position position="271"/>
    </location>
    <ligand>
        <name>(2E)-4-hydroxy-3-methylbut-2-enyl diphosphate</name>
        <dbReference type="ChEBI" id="CHEBI:128753"/>
    </ligand>
</feature>
<feature type="binding site" evidence="1">
    <location>
        <position position="271"/>
    </location>
    <ligand>
        <name>dimethylallyl diphosphate</name>
        <dbReference type="ChEBI" id="CHEBI:57623"/>
    </ligand>
</feature>
<feature type="binding site" evidence="1">
    <location>
        <position position="271"/>
    </location>
    <ligand>
        <name>isopentenyl diphosphate</name>
        <dbReference type="ChEBI" id="CHEBI:128769"/>
    </ligand>
</feature>